<keyword id="KW-1185">Reference proteome</keyword>
<keyword id="KW-0687">Ribonucleoprotein</keyword>
<keyword id="KW-0689">Ribosomal protein</keyword>
<keyword id="KW-0694">RNA-binding</keyword>
<keyword id="KW-0699">rRNA-binding</keyword>
<keyword id="KW-0820">tRNA-binding</keyword>
<protein>
    <recommendedName>
        <fullName evidence="1">Small ribosomal subunit protein uS13</fullName>
    </recommendedName>
    <alternativeName>
        <fullName evidence="3">30S ribosomal protein S13</fullName>
    </alternativeName>
</protein>
<reference key="1">
    <citation type="journal article" date="2008" name="Proc. Natl. Acad. Sci. U.S.A.">
        <title>Niche adaptation and genome expansion in the chlorophyll d-producing cyanobacterium Acaryochloris marina.</title>
        <authorList>
            <person name="Swingley W.D."/>
            <person name="Chen M."/>
            <person name="Cheung P.C."/>
            <person name="Conrad A.L."/>
            <person name="Dejesa L.C."/>
            <person name="Hao J."/>
            <person name="Honchak B.M."/>
            <person name="Karbach L.E."/>
            <person name="Kurdoglu A."/>
            <person name="Lahiri S."/>
            <person name="Mastrian S.D."/>
            <person name="Miyashita H."/>
            <person name="Page L."/>
            <person name="Ramakrishna P."/>
            <person name="Satoh S."/>
            <person name="Sattley W.M."/>
            <person name="Shimada Y."/>
            <person name="Taylor H.L."/>
            <person name="Tomo T."/>
            <person name="Tsuchiya T."/>
            <person name="Wang Z.T."/>
            <person name="Raymond J."/>
            <person name="Mimuro M."/>
            <person name="Blankenship R.E."/>
            <person name="Touchman J.W."/>
        </authorList>
    </citation>
    <scope>NUCLEOTIDE SEQUENCE [LARGE SCALE GENOMIC DNA]</scope>
    <source>
        <strain>MBIC 11017</strain>
    </source>
</reference>
<evidence type="ECO:0000255" key="1">
    <source>
        <dbReference type="HAMAP-Rule" id="MF_01315"/>
    </source>
</evidence>
<evidence type="ECO:0000256" key="2">
    <source>
        <dbReference type="SAM" id="MobiDB-lite"/>
    </source>
</evidence>
<evidence type="ECO:0000305" key="3"/>
<sequence length="126" mass="14130">MARIAGVDLPRDKRIEIGLTYIYGIGLTRSQEILAATGVNPDTRVRELGDQDVAALRNAVAGYQVEGDLRRWESMNVKRLMDIGSYRGRRHRAGLPVRGQRTRTNSRTRRSAKRTVAGKKKAPSKK</sequence>
<gene>
    <name evidence="1" type="primary">rpsM</name>
    <name evidence="1" type="synonym">rps13</name>
    <name type="ordered locus">AM1_1255</name>
</gene>
<accession>B0C432</accession>
<name>RS13_ACAM1</name>
<organism>
    <name type="scientific">Acaryochloris marina (strain MBIC 11017)</name>
    <dbReference type="NCBI Taxonomy" id="329726"/>
    <lineage>
        <taxon>Bacteria</taxon>
        <taxon>Bacillati</taxon>
        <taxon>Cyanobacteriota</taxon>
        <taxon>Cyanophyceae</taxon>
        <taxon>Acaryochloridales</taxon>
        <taxon>Acaryochloridaceae</taxon>
        <taxon>Acaryochloris</taxon>
    </lineage>
</organism>
<dbReference type="EMBL" id="CP000828">
    <property type="protein sequence ID" value="ABW26292.1"/>
    <property type="molecule type" value="Genomic_DNA"/>
</dbReference>
<dbReference type="RefSeq" id="WP_010480576.1">
    <property type="nucleotide sequence ID" value="NC_009925.1"/>
</dbReference>
<dbReference type="SMR" id="B0C432"/>
<dbReference type="STRING" id="329726.AM1_1255"/>
<dbReference type="KEGG" id="amr:AM1_1255"/>
<dbReference type="eggNOG" id="COG0099">
    <property type="taxonomic scope" value="Bacteria"/>
</dbReference>
<dbReference type="HOGENOM" id="CLU_103849_1_2_3"/>
<dbReference type="OrthoDB" id="9803610at2"/>
<dbReference type="Proteomes" id="UP000000268">
    <property type="component" value="Chromosome"/>
</dbReference>
<dbReference type="GO" id="GO:0005829">
    <property type="term" value="C:cytosol"/>
    <property type="evidence" value="ECO:0007669"/>
    <property type="project" value="TreeGrafter"/>
</dbReference>
<dbReference type="GO" id="GO:0015935">
    <property type="term" value="C:small ribosomal subunit"/>
    <property type="evidence" value="ECO:0007669"/>
    <property type="project" value="TreeGrafter"/>
</dbReference>
<dbReference type="GO" id="GO:0019843">
    <property type="term" value="F:rRNA binding"/>
    <property type="evidence" value="ECO:0007669"/>
    <property type="project" value="UniProtKB-UniRule"/>
</dbReference>
<dbReference type="GO" id="GO:0003735">
    <property type="term" value="F:structural constituent of ribosome"/>
    <property type="evidence" value="ECO:0007669"/>
    <property type="project" value="InterPro"/>
</dbReference>
<dbReference type="GO" id="GO:0000049">
    <property type="term" value="F:tRNA binding"/>
    <property type="evidence" value="ECO:0007669"/>
    <property type="project" value="UniProtKB-UniRule"/>
</dbReference>
<dbReference type="GO" id="GO:0006412">
    <property type="term" value="P:translation"/>
    <property type="evidence" value="ECO:0007669"/>
    <property type="project" value="UniProtKB-UniRule"/>
</dbReference>
<dbReference type="FunFam" id="1.10.8.50:FF:000001">
    <property type="entry name" value="30S ribosomal protein S13"/>
    <property type="match status" value="1"/>
</dbReference>
<dbReference type="FunFam" id="4.10.910.10:FF:000001">
    <property type="entry name" value="30S ribosomal protein S13"/>
    <property type="match status" value="1"/>
</dbReference>
<dbReference type="Gene3D" id="1.10.8.50">
    <property type="match status" value="1"/>
</dbReference>
<dbReference type="Gene3D" id="4.10.910.10">
    <property type="entry name" value="30s ribosomal protein s13, domain 2"/>
    <property type="match status" value="1"/>
</dbReference>
<dbReference type="HAMAP" id="MF_01315">
    <property type="entry name" value="Ribosomal_uS13"/>
    <property type="match status" value="1"/>
</dbReference>
<dbReference type="InterPro" id="IPR027437">
    <property type="entry name" value="Rbsml_uS13_C"/>
</dbReference>
<dbReference type="InterPro" id="IPR001892">
    <property type="entry name" value="Ribosomal_uS13"/>
</dbReference>
<dbReference type="InterPro" id="IPR010979">
    <property type="entry name" value="Ribosomal_uS13-like_H2TH"/>
</dbReference>
<dbReference type="InterPro" id="IPR019980">
    <property type="entry name" value="Ribosomal_uS13_bac-type"/>
</dbReference>
<dbReference type="InterPro" id="IPR018269">
    <property type="entry name" value="Ribosomal_uS13_CS"/>
</dbReference>
<dbReference type="NCBIfam" id="TIGR03631">
    <property type="entry name" value="uS13_bact"/>
    <property type="match status" value="1"/>
</dbReference>
<dbReference type="PANTHER" id="PTHR10871">
    <property type="entry name" value="30S RIBOSOMAL PROTEIN S13/40S RIBOSOMAL PROTEIN S18"/>
    <property type="match status" value="1"/>
</dbReference>
<dbReference type="PANTHER" id="PTHR10871:SF1">
    <property type="entry name" value="SMALL RIBOSOMAL SUBUNIT PROTEIN US13M"/>
    <property type="match status" value="1"/>
</dbReference>
<dbReference type="Pfam" id="PF00416">
    <property type="entry name" value="Ribosomal_S13"/>
    <property type="match status" value="1"/>
</dbReference>
<dbReference type="PIRSF" id="PIRSF002134">
    <property type="entry name" value="Ribosomal_S13"/>
    <property type="match status" value="1"/>
</dbReference>
<dbReference type="SUPFAM" id="SSF46946">
    <property type="entry name" value="S13-like H2TH domain"/>
    <property type="match status" value="1"/>
</dbReference>
<dbReference type="PROSITE" id="PS00646">
    <property type="entry name" value="RIBOSOMAL_S13_1"/>
    <property type="match status" value="1"/>
</dbReference>
<dbReference type="PROSITE" id="PS50159">
    <property type="entry name" value="RIBOSOMAL_S13_2"/>
    <property type="match status" value="1"/>
</dbReference>
<comment type="function">
    <text evidence="1">Located at the top of the head of the 30S subunit, it contacts several helices of the 16S rRNA. In the 70S ribosome it contacts the 23S rRNA (bridge B1a) and protein L5 of the 50S subunit (bridge B1b), connecting the 2 subunits; these bridges are implicated in subunit movement. Contacts the tRNAs in the A and P-sites.</text>
</comment>
<comment type="subunit">
    <text evidence="1">Part of the 30S ribosomal subunit. Forms a loose heterodimer with protein S19. Forms two bridges to the 50S subunit in the 70S ribosome.</text>
</comment>
<comment type="similarity">
    <text evidence="1">Belongs to the universal ribosomal protein uS13 family.</text>
</comment>
<proteinExistence type="inferred from homology"/>
<feature type="chain" id="PRO_1000086225" description="Small ribosomal subunit protein uS13">
    <location>
        <begin position="1"/>
        <end position="126"/>
    </location>
</feature>
<feature type="region of interest" description="Disordered" evidence="2">
    <location>
        <begin position="91"/>
        <end position="126"/>
    </location>
</feature>
<feature type="compositionally biased region" description="Basic residues" evidence="2">
    <location>
        <begin position="100"/>
        <end position="126"/>
    </location>
</feature>